<accession>B8FH08</accession>
<sequence length="130" mass="14249">MHEMGIALQIAEIAKSAIPKTPADLKVKAVNLRVGKLTAIVPDSLRFCFEIVAKDTPLAEAELNIEEIPIVAVCKECYTETIITDADFSCEKCKSGKLDIISGRELTVSSIEVADPEEMKQAQKKSKKEK</sequence>
<reference key="1">
    <citation type="journal article" date="2012" name="Environ. Microbiol.">
        <title>The genome sequence of Desulfatibacillum alkenivorans AK-01: a blueprint for anaerobic alkane oxidation.</title>
        <authorList>
            <person name="Callaghan A.V."/>
            <person name="Morris B.E."/>
            <person name="Pereira I.A."/>
            <person name="McInerney M.J."/>
            <person name="Austin R.N."/>
            <person name="Groves J.T."/>
            <person name="Kukor J.J."/>
            <person name="Suflita J.M."/>
            <person name="Young L.Y."/>
            <person name="Zylstra G.J."/>
            <person name="Wawrik B."/>
        </authorList>
    </citation>
    <scope>NUCLEOTIDE SEQUENCE [LARGE SCALE GENOMIC DNA]</scope>
    <source>
        <strain>AK-01</strain>
    </source>
</reference>
<protein>
    <recommendedName>
        <fullName evidence="1">Hydrogenase maturation factor HypA</fullName>
    </recommendedName>
</protein>
<comment type="function">
    <text evidence="1">Involved in the maturation of [NiFe] hydrogenases. Required for nickel insertion into the metal center of the hydrogenase.</text>
</comment>
<comment type="similarity">
    <text evidence="1">Belongs to the HypA/HybF family.</text>
</comment>
<name>HYPA_DESAL</name>
<proteinExistence type="inferred from homology"/>
<feature type="chain" id="PRO_1000190725" description="Hydrogenase maturation factor HypA">
    <location>
        <begin position="1"/>
        <end position="130"/>
    </location>
</feature>
<feature type="binding site" evidence="1">
    <location>
        <position position="2"/>
    </location>
    <ligand>
        <name>Ni(2+)</name>
        <dbReference type="ChEBI" id="CHEBI:49786"/>
    </ligand>
</feature>
<feature type="binding site" evidence="1">
    <location>
        <position position="74"/>
    </location>
    <ligand>
        <name>Zn(2+)</name>
        <dbReference type="ChEBI" id="CHEBI:29105"/>
    </ligand>
</feature>
<feature type="binding site" evidence="1">
    <location>
        <position position="77"/>
    </location>
    <ligand>
        <name>Zn(2+)</name>
        <dbReference type="ChEBI" id="CHEBI:29105"/>
    </ligand>
</feature>
<feature type="binding site" evidence="1">
    <location>
        <position position="90"/>
    </location>
    <ligand>
        <name>Zn(2+)</name>
        <dbReference type="ChEBI" id="CHEBI:29105"/>
    </ligand>
</feature>
<feature type="binding site" evidence="1">
    <location>
        <position position="93"/>
    </location>
    <ligand>
        <name>Zn(2+)</name>
        <dbReference type="ChEBI" id="CHEBI:29105"/>
    </ligand>
</feature>
<evidence type="ECO:0000255" key="1">
    <source>
        <dbReference type="HAMAP-Rule" id="MF_00213"/>
    </source>
</evidence>
<dbReference type="EMBL" id="CP001322">
    <property type="protein sequence ID" value="ACL02096.1"/>
    <property type="molecule type" value="Genomic_DNA"/>
</dbReference>
<dbReference type="RefSeq" id="WP_012609536.1">
    <property type="nucleotide sequence ID" value="NC_011768.1"/>
</dbReference>
<dbReference type="SMR" id="B8FH08"/>
<dbReference type="KEGG" id="dal:Dalk_0387"/>
<dbReference type="eggNOG" id="COG0375">
    <property type="taxonomic scope" value="Bacteria"/>
</dbReference>
<dbReference type="HOGENOM" id="CLU_126929_0_0_7"/>
<dbReference type="Proteomes" id="UP000000739">
    <property type="component" value="Chromosome"/>
</dbReference>
<dbReference type="GO" id="GO:0016151">
    <property type="term" value="F:nickel cation binding"/>
    <property type="evidence" value="ECO:0007669"/>
    <property type="project" value="UniProtKB-UniRule"/>
</dbReference>
<dbReference type="GO" id="GO:0008270">
    <property type="term" value="F:zinc ion binding"/>
    <property type="evidence" value="ECO:0007669"/>
    <property type="project" value="UniProtKB-UniRule"/>
</dbReference>
<dbReference type="GO" id="GO:0051604">
    <property type="term" value="P:protein maturation"/>
    <property type="evidence" value="ECO:0007669"/>
    <property type="project" value="InterPro"/>
</dbReference>
<dbReference type="GO" id="GO:0036211">
    <property type="term" value="P:protein modification process"/>
    <property type="evidence" value="ECO:0007669"/>
    <property type="project" value="UniProtKB-UniRule"/>
</dbReference>
<dbReference type="Gene3D" id="3.30.2320.80">
    <property type="match status" value="1"/>
</dbReference>
<dbReference type="HAMAP" id="MF_00213">
    <property type="entry name" value="HypA_HybF"/>
    <property type="match status" value="1"/>
</dbReference>
<dbReference type="InterPro" id="IPR020538">
    <property type="entry name" value="Hydgase_Ni_incorp_HypA/HybF_CS"/>
</dbReference>
<dbReference type="InterPro" id="IPR000688">
    <property type="entry name" value="HypA/HybF"/>
</dbReference>
<dbReference type="NCBIfam" id="TIGR00100">
    <property type="entry name" value="hypA"/>
    <property type="match status" value="1"/>
</dbReference>
<dbReference type="PANTHER" id="PTHR34535">
    <property type="entry name" value="HYDROGENASE MATURATION FACTOR HYPA"/>
    <property type="match status" value="1"/>
</dbReference>
<dbReference type="PANTHER" id="PTHR34535:SF3">
    <property type="entry name" value="HYDROGENASE MATURATION FACTOR HYPA"/>
    <property type="match status" value="1"/>
</dbReference>
<dbReference type="Pfam" id="PF01155">
    <property type="entry name" value="HypA"/>
    <property type="match status" value="1"/>
</dbReference>
<dbReference type="PIRSF" id="PIRSF004761">
    <property type="entry name" value="Hydrgn_mat_HypA"/>
    <property type="match status" value="1"/>
</dbReference>
<dbReference type="PROSITE" id="PS01249">
    <property type="entry name" value="HYPA"/>
    <property type="match status" value="1"/>
</dbReference>
<gene>
    <name evidence="1" type="primary">hypA</name>
    <name type="ordered locus">Dalk_0387</name>
</gene>
<keyword id="KW-0479">Metal-binding</keyword>
<keyword id="KW-0533">Nickel</keyword>
<keyword id="KW-1185">Reference proteome</keyword>
<keyword id="KW-0862">Zinc</keyword>
<organism>
    <name type="scientific">Desulfatibacillum aliphaticivorans</name>
    <dbReference type="NCBI Taxonomy" id="218208"/>
    <lineage>
        <taxon>Bacteria</taxon>
        <taxon>Pseudomonadati</taxon>
        <taxon>Thermodesulfobacteriota</taxon>
        <taxon>Desulfobacteria</taxon>
        <taxon>Desulfobacterales</taxon>
        <taxon>Desulfatibacillaceae</taxon>
        <taxon>Desulfatibacillum</taxon>
    </lineage>
</organism>